<evidence type="ECO:0000255" key="1">
    <source>
        <dbReference type="HAMAP-Rule" id="MF_00003"/>
    </source>
</evidence>
<comment type="function">
    <text evidence="1">One of several proteins that assist in the late maturation steps of the functional core of the 30S ribosomal subunit. Associates with free 30S ribosomal subunits (but not with 30S subunits that are part of 70S ribosomes or polysomes). Required for efficient processing of 16S rRNA. May interact with the 5'-terminal helix region of 16S rRNA.</text>
</comment>
<comment type="subunit">
    <text evidence="1">Monomer. Binds 30S ribosomal subunits, but not 50S ribosomal subunits or 70S ribosomes.</text>
</comment>
<comment type="subcellular location">
    <subcellularLocation>
        <location evidence="1">Cytoplasm</location>
    </subcellularLocation>
</comment>
<comment type="similarity">
    <text evidence="1">Belongs to the RbfA family.</text>
</comment>
<dbReference type="EMBL" id="AP009049">
    <property type="protein sequence ID" value="BAH06378.1"/>
    <property type="molecule type" value="Genomic_DNA"/>
</dbReference>
<dbReference type="RefSeq" id="WP_012101821.1">
    <property type="nucleotide sequence ID" value="NC_011837.1"/>
</dbReference>
<dbReference type="SMR" id="B9E1K3"/>
<dbReference type="KEGG" id="ckr:CKR_1327"/>
<dbReference type="HOGENOM" id="CLU_089475_6_3_9"/>
<dbReference type="Proteomes" id="UP000007969">
    <property type="component" value="Chromosome"/>
</dbReference>
<dbReference type="GO" id="GO:0005829">
    <property type="term" value="C:cytosol"/>
    <property type="evidence" value="ECO:0007669"/>
    <property type="project" value="TreeGrafter"/>
</dbReference>
<dbReference type="GO" id="GO:0043024">
    <property type="term" value="F:ribosomal small subunit binding"/>
    <property type="evidence" value="ECO:0007669"/>
    <property type="project" value="TreeGrafter"/>
</dbReference>
<dbReference type="GO" id="GO:0030490">
    <property type="term" value="P:maturation of SSU-rRNA"/>
    <property type="evidence" value="ECO:0007669"/>
    <property type="project" value="UniProtKB-UniRule"/>
</dbReference>
<dbReference type="Gene3D" id="3.30.300.20">
    <property type="match status" value="1"/>
</dbReference>
<dbReference type="HAMAP" id="MF_00003">
    <property type="entry name" value="RbfA"/>
    <property type="match status" value="1"/>
</dbReference>
<dbReference type="InterPro" id="IPR015946">
    <property type="entry name" value="KH_dom-like_a/b"/>
</dbReference>
<dbReference type="InterPro" id="IPR000238">
    <property type="entry name" value="RbfA"/>
</dbReference>
<dbReference type="InterPro" id="IPR023799">
    <property type="entry name" value="RbfA_dom_sf"/>
</dbReference>
<dbReference type="InterPro" id="IPR020053">
    <property type="entry name" value="Ribosome-bd_factorA_CS"/>
</dbReference>
<dbReference type="NCBIfam" id="TIGR00082">
    <property type="entry name" value="rbfA"/>
    <property type="match status" value="1"/>
</dbReference>
<dbReference type="PANTHER" id="PTHR33515">
    <property type="entry name" value="RIBOSOME-BINDING FACTOR A, CHLOROPLASTIC-RELATED"/>
    <property type="match status" value="1"/>
</dbReference>
<dbReference type="PANTHER" id="PTHR33515:SF1">
    <property type="entry name" value="RIBOSOME-BINDING FACTOR A, CHLOROPLASTIC-RELATED"/>
    <property type="match status" value="1"/>
</dbReference>
<dbReference type="Pfam" id="PF02033">
    <property type="entry name" value="RBFA"/>
    <property type="match status" value="1"/>
</dbReference>
<dbReference type="SUPFAM" id="SSF89919">
    <property type="entry name" value="Ribosome-binding factor A, RbfA"/>
    <property type="match status" value="1"/>
</dbReference>
<dbReference type="PROSITE" id="PS01319">
    <property type="entry name" value="RBFA"/>
    <property type="match status" value="1"/>
</dbReference>
<feature type="chain" id="PRO_1000193243" description="Ribosome-binding factor A">
    <location>
        <begin position="1"/>
        <end position="121"/>
    </location>
</feature>
<protein>
    <recommendedName>
        <fullName evidence="1">Ribosome-binding factor A</fullName>
    </recommendedName>
</protein>
<keyword id="KW-0963">Cytoplasm</keyword>
<keyword id="KW-0690">Ribosome biogenesis</keyword>
<organism>
    <name type="scientific">Clostridium kluyveri (strain NBRC 12016)</name>
    <dbReference type="NCBI Taxonomy" id="583346"/>
    <lineage>
        <taxon>Bacteria</taxon>
        <taxon>Bacillati</taxon>
        <taxon>Bacillota</taxon>
        <taxon>Clostridia</taxon>
        <taxon>Eubacteriales</taxon>
        <taxon>Clostridiaceae</taxon>
        <taxon>Clostridium</taxon>
    </lineage>
</organism>
<gene>
    <name evidence="1" type="primary">rbfA</name>
    <name type="ordered locus">CKR_1327</name>
</gene>
<proteinExistence type="inferred from homology"/>
<sequence>MTNYRSGRINEEMKREISNIIRNDMKDPRLSAMVSVTKVDVTKDQKYAKVFVSIYGEDKSKDDTFQVLKSSESFIRREVGHRVKLRNTPEIIIEMDNTIEYGMHINELLHKIKENEKHDNE</sequence>
<accession>B9E1K3</accession>
<reference key="1">
    <citation type="submission" date="2005-09" db="EMBL/GenBank/DDBJ databases">
        <title>Complete genome sequence of Clostridium kluyveri and comparative genomics of Clostridia species.</title>
        <authorList>
            <person name="Inui M."/>
            <person name="Nonaka H."/>
            <person name="Shinoda Y."/>
            <person name="Ikenaga Y."/>
            <person name="Abe M."/>
            <person name="Naito K."/>
            <person name="Vertes A.A."/>
            <person name="Yukawa H."/>
        </authorList>
    </citation>
    <scope>NUCLEOTIDE SEQUENCE [LARGE SCALE GENOMIC DNA]</scope>
    <source>
        <strain>NBRC 12016</strain>
    </source>
</reference>
<name>RBFA_CLOK1</name>